<dbReference type="EMBL" id="AE008692">
    <property type="protein sequence ID" value="AAV89345.1"/>
    <property type="molecule type" value="Genomic_DNA"/>
</dbReference>
<dbReference type="RefSeq" id="WP_011240607.1">
    <property type="nucleotide sequence ID" value="NZ_CP035711.1"/>
</dbReference>
<dbReference type="SMR" id="Q5NPL5"/>
<dbReference type="STRING" id="264203.ZMO0721"/>
<dbReference type="GeneID" id="79904108"/>
<dbReference type="KEGG" id="zmo:ZMO0721"/>
<dbReference type="eggNOG" id="COG0691">
    <property type="taxonomic scope" value="Bacteria"/>
</dbReference>
<dbReference type="HOGENOM" id="CLU_108953_0_1_5"/>
<dbReference type="Proteomes" id="UP000001173">
    <property type="component" value="Chromosome"/>
</dbReference>
<dbReference type="GO" id="GO:0005829">
    <property type="term" value="C:cytosol"/>
    <property type="evidence" value="ECO:0007669"/>
    <property type="project" value="TreeGrafter"/>
</dbReference>
<dbReference type="GO" id="GO:0003723">
    <property type="term" value="F:RNA binding"/>
    <property type="evidence" value="ECO:0007669"/>
    <property type="project" value="UniProtKB-UniRule"/>
</dbReference>
<dbReference type="GO" id="GO:0070929">
    <property type="term" value="P:trans-translation"/>
    <property type="evidence" value="ECO:0007669"/>
    <property type="project" value="UniProtKB-UniRule"/>
</dbReference>
<dbReference type="CDD" id="cd09294">
    <property type="entry name" value="SmpB"/>
    <property type="match status" value="1"/>
</dbReference>
<dbReference type="Gene3D" id="2.40.280.10">
    <property type="match status" value="1"/>
</dbReference>
<dbReference type="HAMAP" id="MF_00023">
    <property type="entry name" value="SmpB"/>
    <property type="match status" value="1"/>
</dbReference>
<dbReference type="InterPro" id="IPR023620">
    <property type="entry name" value="SmpB"/>
</dbReference>
<dbReference type="InterPro" id="IPR000037">
    <property type="entry name" value="SsrA-bd_prot"/>
</dbReference>
<dbReference type="InterPro" id="IPR020081">
    <property type="entry name" value="SsrA-bd_prot_CS"/>
</dbReference>
<dbReference type="NCBIfam" id="NF003843">
    <property type="entry name" value="PRK05422.1"/>
    <property type="match status" value="1"/>
</dbReference>
<dbReference type="NCBIfam" id="TIGR00086">
    <property type="entry name" value="smpB"/>
    <property type="match status" value="1"/>
</dbReference>
<dbReference type="PANTHER" id="PTHR30308:SF2">
    <property type="entry name" value="SSRA-BINDING PROTEIN"/>
    <property type="match status" value="1"/>
</dbReference>
<dbReference type="PANTHER" id="PTHR30308">
    <property type="entry name" value="TMRNA-BINDING COMPONENT OF TRANS-TRANSLATION TAGGING COMPLEX"/>
    <property type="match status" value="1"/>
</dbReference>
<dbReference type="Pfam" id="PF01668">
    <property type="entry name" value="SmpB"/>
    <property type="match status" value="1"/>
</dbReference>
<dbReference type="SUPFAM" id="SSF74982">
    <property type="entry name" value="Small protein B (SmpB)"/>
    <property type="match status" value="1"/>
</dbReference>
<dbReference type="PROSITE" id="PS01317">
    <property type="entry name" value="SSRP"/>
    <property type="match status" value="1"/>
</dbReference>
<proteinExistence type="inferred from homology"/>
<accession>Q5NPL5</accession>
<organism>
    <name type="scientific">Zymomonas mobilis subsp. mobilis (strain ATCC 31821 / ZM4 / CP4)</name>
    <dbReference type="NCBI Taxonomy" id="264203"/>
    <lineage>
        <taxon>Bacteria</taxon>
        <taxon>Pseudomonadati</taxon>
        <taxon>Pseudomonadota</taxon>
        <taxon>Alphaproteobacteria</taxon>
        <taxon>Sphingomonadales</taxon>
        <taxon>Zymomonadaceae</taxon>
        <taxon>Zymomonas</taxon>
    </lineage>
</organism>
<reference key="1">
    <citation type="journal article" date="2005" name="Nat. Biotechnol.">
        <title>The genome sequence of the ethanologenic bacterium Zymomonas mobilis ZM4.</title>
        <authorList>
            <person name="Seo J.-S."/>
            <person name="Chong H."/>
            <person name="Park H.S."/>
            <person name="Yoon K.-O."/>
            <person name="Jung C."/>
            <person name="Kim J.J."/>
            <person name="Hong J.H."/>
            <person name="Kim H."/>
            <person name="Kim J.-H."/>
            <person name="Kil J.-I."/>
            <person name="Park C.J."/>
            <person name="Oh H.-M."/>
            <person name="Lee J.-S."/>
            <person name="Jin S.-J."/>
            <person name="Um H.-W."/>
            <person name="Lee H.-J."/>
            <person name="Oh S.-J."/>
            <person name="Kim J.Y."/>
            <person name="Kang H.L."/>
            <person name="Lee S.Y."/>
            <person name="Lee K.J."/>
            <person name="Kang H.S."/>
        </authorList>
    </citation>
    <scope>NUCLEOTIDE SEQUENCE [LARGE SCALE GENOMIC DNA]</scope>
    <source>
        <strain>ATCC 31821 / ZM4 / CP4</strain>
    </source>
</reference>
<feature type="chain" id="PRO_0000103078" description="SsrA-binding protein">
    <location>
        <begin position="1"/>
        <end position="160"/>
    </location>
</feature>
<name>SSRP_ZYMMO</name>
<evidence type="ECO:0000255" key="1">
    <source>
        <dbReference type="HAMAP-Rule" id="MF_00023"/>
    </source>
</evidence>
<protein>
    <recommendedName>
        <fullName evidence="1">SsrA-binding protein</fullName>
    </recommendedName>
    <alternativeName>
        <fullName evidence="1">Small protein B</fullName>
    </alternativeName>
</protein>
<gene>
    <name evidence="1" type="primary">smpB</name>
    <name type="ordered locus">ZMO0721</name>
</gene>
<keyword id="KW-0963">Cytoplasm</keyword>
<keyword id="KW-1185">Reference proteome</keyword>
<keyword id="KW-0694">RNA-binding</keyword>
<comment type="function">
    <text evidence="1">Required for rescue of stalled ribosomes mediated by trans-translation. Binds to transfer-messenger RNA (tmRNA), required for stable association of tmRNA with ribosomes. tmRNA and SmpB together mimic tRNA shape, replacing the anticodon stem-loop with SmpB. tmRNA is encoded by the ssrA gene; the 2 termini fold to resemble tRNA(Ala) and it encodes a 'tag peptide', a short internal open reading frame. During trans-translation Ala-aminoacylated tmRNA acts like a tRNA, entering the A-site of stalled ribosomes, displacing the stalled mRNA. The ribosome then switches to translate the ORF on the tmRNA; the nascent peptide is terminated with the 'tag peptide' encoded by the tmRNA and targeted for degradation. The ribosome is freed to recommence translation, which seems to be the essential function of trans-translation.</text>
</comment>
<comment type="subcellular location">
    <subcellularLocation>
        <location evidence="1">Cytoplasm</location>
    </subcellularLocation>
    <text evidence="1">The tmRNA-SmpB complex associates with stalled 70S ribosomes.</text>
</comment>
<comment type="similarity">
    <text evidence="1">Belongs to the SmpB family.</text>
</comment>
<sequence>MAAFRPPQFKKSKILAENRRARYEYAFEDFYEAGLALTGTEVKSLRFGQGSIAESYAEVKNGEVTLINANIPEFSHGNRFNHEPKRPRKLLLHEREIRKMQTAVSREGMTVIPVSLYFNNKGKAKLELAIARGKKTHDKRATIKERDWKRDQARLLRDKG</sequence>